<organism>
    <name type="scientific">Listeria innocua serovar 6a (strain ATCC BAA-680 / CLIP 11262)</name>
    <dbReference type="NCBI Taxonomy" id="272626"/>
    <lineage>
        <taxon>Bacteria</taxon>
        <taxon>Bacillati</taxon>
        <taxon>Bacillota</taxon>
        <taxon>Bacilli</taxon>
        <taxon>Bacillales</taxon>
        <taxon>Listeriaceae</taxon>
        <taxon>Listeria</taxon>
    </lineage>
</organism>
<evidence type="ECO:0000250" key="1"/>
<evidence type="ECO:0000255" key="2">
    <source>
        <dbReference type="PROSITE-ProRule" id="PRU00198"/>
    </source>
</evidence>
<evidence type="ECO:0000305" key="3"/>
<reference key="1">
    <citation type="journal article" date="2001" name="Science">
        <title>Comparative genomics of Listeria species.</title>
        <authorList>
            <person name="Glaser P."/>
            <person name="Frangeul L."/>
            <person name="Buchrieser C."/>
            <person name="Rusniok C."/>
            <person name="Amend A."/>
            <person name="Baquero F."/>
            <person name="Berche P."/>
            <person name="Bloecker H."/>
            <person name="Brandt P."/>
            <person name="Chakraborty T."/>
            <person name="Charbit A."/>
            <person name="Chetouani F."/>
            <person name="Couve E."/>
            <person name="de Daruvar A."/>
            <person name="Dehoux P."/>
            <person name="Domann E."/>
            <person name="Dominguez-Bernal G."/>
            <person name="Duchaud E."/>
            <person name="Durant L."/>
            <person name="Dussurget O."/>
            <person name="Entian K.-D."/>
            <person name="Fsihi H."/>
            <person name="Garcia-del Portillo F."/>
            <person name="Garrido P."/>
            <person name="Gautier L."/>
            <person name="Goebel W."/>
            <person name="Gomez-Lopez N."/>
            <person name="Hain T."/>
            <person name="Hauf J."/>
            <person name="Jackson D."/>
            <person name="Jones L.-M."/>
            <person name="Kaerst U."/>
            <person name="Kreft J."/>
            <person name="Kuhn M."/>
            <person name="Kunst F."/>
            <person name="Kurapkat G."/>
            <person name="Madueno E."/>
            <person name="Maitournam A."/>
            <person name="Mata Vicente J."/>
            <person name="Ng E."/>
            <person name="Nedjari H."/>
            <person name="Nordsiek G."/>
            <person name="Novella S."/>
            <person name="de Pablos B."/>
            <person name="Perez-Diaz J.-C."/>
            <person name="Purcell R."/>
            <person name="Remmel B."/>
            <person name="Rose M."/>
            <person name="Schlueter T."/>
            <person name="Simoes N."/>
            <person name="Tierrez A."/>
            <person name="Vazquez-Boland J.-A."/>
            <person name="Voss H."/>
            <person name="Wehland J."/>
            <person name="Cossart P."/>
        </authorList>
    </citation>
    <scope>NUCLEOTIDE SEQUENCE [LARGE SCALE GENOMIC DNA]</scope>
    <source>
        <strain>ATCC BAA-680 / CLIP 11262</strain>
    </source>
</reference>
<name>RSBV_LISIN</name>
<protein>
    <recommendedName>
        <fullName>Anti-sigma-B factor antagonist</fullName>
    </recommendedName>
    <alternativeName>
        <fullName>Anti-anti-sigma-B factor</fullName>
    </alternativeName>
</protein>
<accession>P0A4J9</accession>
<accession>O85016</accession>
<dbReference type="EMBL" id="AL596166">
    <property type="protein sequence ID" value="CAC96124.1"/>
    <property type="molecule type" value="Genomic_DNA"/>
</dbReference>
<dbReference type="PIR" id="AD1544">
    <property type="entry name" value="AD1544"/>
</dbReference>
<dbReference type="RefSeq" id="WP_003721460.1">
    <property type="nucleotide sequence ID" value="NC_003212.1"/>
</dbReference>
<dbReference type="SMR" id="P0A4J9"/>
<dbReference type="STRING" id="272626.gene:17565219"/>
<dbReference type="GeneID" id="93238768"/>
<dbReference type="KEGG" id="lin:rsbV"/>
<dbReference type="eggNOG" id="COG1366">
    <property type="taxonomic scope" value="Bacteria"/>
</dbReference>
<dbReference type="HOGENOM" id="CLU_115403_9_3_9"/>
<dbReference type="OrthoDB" id="9793697at2"/>
<dbReference type="Proteomes" id="UP000002513">
    <property type="component" value="Chromosome"/>
</dbReference>
<dbReference type="GO" id="GO:0043856">
    <property type="term" value="F:anti-sigma factor antagonist activity"/>
    <property type="evidence" value="ECO:0007669"/>
    <property type="project" value="InterPro"/>
</dbReference>
<dbReference type="CDD" id="cd07043">
    <property type="entry name" value="STAS_anti-anti-sigma_factors"/>
    <property type="match status" value="1"/>
</dbReference>
<dbReference type="FunFam" id="3.30.750.24:FF:000001">
    <property type="entry name" value="Anti-sigma factor antagonist"/>
    <property type="match status" value="1"/>
</dbReference>
<dbReference type="Gene3D" id="3.30.750.24">
    <property type="entry name" value="STAS domain"/>
    <property type="match status" value="1"/>
</dbReference>
<dbReference type="InterPro" id="IPR003658">
    <property type="entry name" value="Anti-sigma_ant"/>
</dbReference>
<dbReference type="InterPro" id="IPR002645">
    <property type="entry name" value="STAS_dom"/>
</dbReference>
<dbReference type="InterPro" id="IPR036513">
    <property type="entry name" value="STAS_dom_sf"/>
</dbReference>
<dbReference type="NCBIfam" id="TIGR00377">
    <property type="entry name" value="ant_ant_sig"/>
    <property type="match status" value="1"/>
</dbReference>
<dbReference type="PANTHER" id="PTHR33495">
    <property type="entry name" value="ANTI-SIGMA FACTOR ANTAGONIST TM_1081-RELATED-RELATED"/>
    <property type="match status" value="1"/>
</dbReference>
<dbReference type="PANTHER" id="PTHR33495:SF9">
    <property type="entry name" value="ANTI-SIGMA-B FACTOR ANTAGONIST"/>
    <property type="match status" value="1"/>
</dbReference>
<dbReference type="Pfam" id="PF01740">
    <property type="entry name" value="STAS"/>
    <property type="match status" value="1"/>
</dbReference>
<dbReference type="SUPFAM" id="SSF52091">
    <property type="entry name" value="SpoIIaa-like"/>
    <property type="match status" value="1"/>
</dbReference>
<dbReference type="PROSITE" id="PS50801">
    <property type="entry name" value="STAS"/>
    <property type="match status" value="1"/>
</dbReference>
<comment type="function">
    <text evidence="1">Positive regulator of sigma-B activity. Non-phosphorylated RsbV binds to RsbW, preventing its association with sigma-B. When phosphorylated, releases RsbW, which is then free to complex with and inactivate sigma-B (By similarity).</text>
</comment>
<comment type="PTM">
    <text evidence="1">Phosphorylated by RsbW on a serine residue.</text>
</comment>
<comment type="similarity">
    <text evidence="3">Belongs to the anti-sigma-factor antagonist family.</text>
</comment>
<keyword id="KW-0597">Phosphoprotein</keyword>
<feature type="chain" id="PRO_0000194186" description="Anti-sigma-B factor antagonist">
    <location>
        <begin position="1"/>
        <end position="114"/>
    </location>
</feature>
<feature type="domain" description="STAS" evidence="2">
    <location>
        <begin position="4"/>
        <end position="114"/>
    </location>
</feature>
<feature type="modified residue" description="Phosphoserine" evidence="1">
    <location>
        <position position="58"/>
    </location>
</feature>
<gene>
    <name type="primary">rsbV</name>
    <name type="ordered locus">lin0892</name>
</gene>
<proteinExistence type="inferred from homology"/>
<sequence length="114" mass="12799">MNISIEIKERDTDHIDIFVAGEIDAYTAPKVKEALEVYQVKEGIVLRIDLTEVSYMDSTGLGVFVGAFKSLRQRQSELVLFGLSDRLFRLFEITGLSDIIEIKNVEGEMNGNNA</sequence>